<protein>
    <recommendedName>
        <fullName evidence="8">Voltage-dependent calcium channel gamma-8 subunit</fullName>
    </recommendedName>
    <alternativeName>
        <fullName>Neuronal voltage-gated calcium channel gamma-8 subunit</fullName>
    </alternativeName>
    <alternativeName>
        <fullName>Transmembrane AMPAR regulatory protein gamma-8</fullName>
        <shortName>TARP gamma-8</shortName>
    </alternativeName>
</protein>
<comment type="function">
    <text evidence="2 5 6">Regulates the activity of L-type calcium channels that contain CACNA1C as pore-forming subunit (By similarity). Regulates the trafficking and gating properties of AMPA-selective glutamate receptors (AMPARs). Promotes their targeting to the cell membrane and synapses and modulates their gating properties by slowing their rates of activation, deactivation and desensitization and by mediating their resensitization. Does not show subunit-specific AMPA receptor regulation and regulates all AMPAR subunits. Thought to stabilize the calcium channel in an inactivated (closed) state.</text>
</comment>
<comment type="subunit">
    <text evidence="1 2">Interacts with CACNA1C. Identified in a complex with the L-type calcium channel subunits CACNA1C, CACNA2D1 and either CACNB1 or CACNB2 (By similarity). Acts as an auxiliary subunit for AMPA-selective glutamate receptors (AMPARs). Found in a complex with GRIA1, GRIA2, GRIA3, GRIA4, CNIH2, CNIH3, CACNG2, CACNG3, CACNG4, CACNG5 and CACNG7. Interacts with CNIH2 (By similarity). Found in a complex with GRIA1, GRIA2, GRIA3, GRIA4, DLG4 and CNIH2 (By similarity).</text>
</comment>
<comment type="interaction">
    <interactant intactId="EBI-9086576">
        <id>Q8VHW5</id>
    </interactant>
    <interactant intactId="EBI-7022944">
        <id>P63329</id>
        <label>Ppp3ca</label>
    </interactant>
    <organismsDiffer>false</organismsDiffer>
    <experiments>6</experiments>
</comment>
<comment type="interaction">
    <interactant intactId="EBI-9086576">
        <id>Q8VHW5</id>
    </interactant>
    <interactant intactId="EBI-352922">
        <id>Q08209</id>
        <label>PPP3CA</label>
    </interactant>
    <organismsDiffer>true</organismsDiffer>
    <experiments>2</experiments>
</comment>
<comment type="subcellular location">
    <subcellularLocation>
        <location evidence="2">Cell membrane</location>
        <topology evidence="8">Multi-pass membrane protein</topology>
    </subcellularLocation>
    <subcellularLocation>
        <location evidence="2">Postsynaptic density membrane</location>
    </subcellularLocation>
</comment>
<comment type="PTM">
    <text evidence="7">Palmitoylated (PubMed:23687301). Probably palmitoylated by ZDHHC3 and ZDHHC7 (PubMed:23687301).</text>
</comment>
<comment type="similarity">
    <text evidence="8">Belongs to the PMP-22/EMP/MP20 family. CACNG subfamily.</text>
</comment>
<evidence type="ECO:0000250" key="1"/>
<evidence type="ECO:0000250" key="2">
    <source>
        <dbReference type="UniProtKB" id="Q8VHW2"/>
    </source>
</evidence>
<evidence type="ECO:0000255" key="3"/>
<evidence type="ECO:0000256" key="4">
    <source>
        <dbReference type="SAM" id="MobiDB-lite"/>
    </source>
</evidence>
<evidence type="ECO:0000269" key="5">
    <source>
    </source>
</evidence>
<evidence type="ECO:0000269" key="6">
    <source>
    </source>
</evidence>
<evidence type="ECO:0000269" key="7">
    <source>
    </source>
</evidence>
<evidence type="ECO:0000305" key="8"/>
<evidence type="ECO:0000312" key="9">
    <source>
        <dbReference type="RGD" id="628808"/>
    </source>
</evidence>
<evidence type="ECO:0007744" key="10">
    <source>
    </source>
</evidence>
<evidence type="ECO:0007829" key="11">
    <source>
        <dbReference type="PDB" id="7OCD"/>
    </source>
</evidence>
<evidence type="ECO:0007829" key="12">
    <source>
        <dbReference type="PDB" id="8AYN"/>
    </source>
</evidence>
<evidence type="ECO:0007829" key="13">
    <source>
        <dbReference type="PDB" id="8AYO"/>
    </source>
</evidence>
<accession>Q8VHW5</accession>
<name>CCG8_RAT</name>
<reference key="1">
    <citation type="journal article" date="2001" name="Gene">
        <title>Calcium channel gamma subunits provide insights into the evolution of this gene family.</title>
        <authorList>
            <person name="Chu P.-J."/>
            <person name="Robertson H.M."/>
            <person name="Best P.M."/>
        </authorList>
    </citation>
    <scope>NUCLEOTIDE SEQUENCE [MRNA]</scope>
    <source>
        <strain>Sprague-Dawley</strain>
    </source>
</reference>
<reference key="2">
    <citation type="journal article" date="2007" name="Neuron">
        <title>TARP subtypes differentially and dose-dependently control synaptic AMPA receptor gating.</title>
        <authorList>
            <person name="Milstein A.D."/>
            <person name="Zhou W."/>
            <person name="Karimzadegan S."/>
            <person name="Bredt D.S."/>
            <person name="Nicoll R.A."/>
        </authorList>
    </citation>
    <scope>FUNCTION</scope>
</reference>
<reference key="3">
    <citation type="journal article" date="2009" name="Nat. Neurosci.">
        <title>Selective regulation of long-form calcium-permeable AMPA receptors by an atypical TARP, gamma-5.</title>
        <authorList>
            <person name="Soto D."/>
            <person name="Coombs I.D."/>
            <person name="Renzi M."/>
            <person name="Zonouzi M."/>
            <person name="Farrant M."/>
            <person name="Cull-Candy S.G."/>
        </authorList>
    </citation>
    <scope>FUNCTION</scope>
</reference>
<reference key="4">
    <citation type="journal article" date="2009" name="Nat. Neurosci.">
        <authorList>
            <person name="Soto D."/>
            <person name="Coombs I.D."/>
            <person name="Renzi M."/>
            <person name="Zonouzi M."/>
            <person name="Farrant M."/>
            <person name="Cull-Candy S.G."/>
        </authorList>
    </citation>
    <scope>ERRATUM OF PUBMED:19234459</scope>
</reference>
<reference key="5">
    <citation type="journal article" date="2009" name="Science">
        <title>Functional proteomics identify cornichon proteins as auxiliary subunits of AMPA receptors.</title>
        <authorList>
            <person name="Schwenk J."/>
            <person name="Harmel N."/>
            <person name="Zolles G."/>
            <person name="Bildl W."/>
            <person name="Kulik A."/>
            <person name="Heimrich B."/>
            <person name="Chisaka O."/>
            <person name="Jonas P."/>
            <person name="Schulte U."/>
            <person name="Fakler B."/>
            <person name="Kloecker N."/>
        </authorList>
    </citation>
    <scope>SUBUNIT</scope>
    <scope>IDENTIFICATION BY MASS SPECTROMETRY</scope>
</reference>
<reference key="6">
    <citation type="journal article" date="2012" name="Nat. Commun.">
        <title>Quantitative maps of protein phosphorylation sites across 14 different rat organs and tissues.</title>
        <authorList>
            <person name="Lundby A."/>
            <person name="Secher A."/>
            <person name="Lage K."/>
            <person name="Nordsborg N.B."/>
            <person name="Dmytriyev A."/>
            <person name="Lundby C."/>
            <person name="Olsen J.V."/>
        </authorList>
    </citation>
    <scope>PHOSPHORYLATION [LARGE SCALE ANALYSIS] AT SER-251 AND SER-254</scope>
    <scope>IDENTIFICATION BY MASS SPECTROMETRY [LARGE SCALE ANALYSIS]</scope>
</reference>
<reference key="7">
    <citation type="journal article" date="2013" name="J. Biol. Chem.">
        <title>In silico screening for palmitoyl substrates reveals a role for DHHC1/3/10 (zDHHC1/3/11)-mediated neurochondrin palmitoylation in its targeting to Rab5-positive endosomes.</title>
        <authorList>
            <person name="Oku S."/>
            <person name="Takahashi N."/>
            <person name="Fukata Y."/>
            <person name="Fukata M."/>
        </authorList>
    </citation>
    <scope>PALMITOYLATION</scope>
</reference>
<gene>
    <name evidence="9" type="primary">Cacng8</name>
</gene>
<feature type="chain" id="PRO_0000164692" description="Voltage-dependent calcium channel gamma-8 subunit">
    <location>
        <begin position="1"/>
        <end position="421"/>
    </location>
</feature>
<feature type="transmembrane region" description="Helical" evidence="3">
    <location>
        <begin position="19"/>
        <end position="39"/>
    </location>
</feature>
<feature type="transmembrane region" description="Helical" evidence="3">
    <location>
        <begin position="127"/>
        <end position="147"/>
    </location>
</feature>
<feature type="transmembrane region" description="Helical" evidence="3">
    <location>
        <begin position="157"/>
        <end position="177"/>
    </location>
</feature>
<feature type="transmembrane region" description="Helical" evidence="3">
    <location>
        <begin position="207"/>
        <end position="227"/>
    </location>
</feature>
<feature type="transmembrane region" description="Helical" evidence="3">
    <location>
        <begin position="318"/>
        <end position="338"/>
    </location>
</feature>
<feature type="region of interest" description="Disordered" evidence="4">
    <location>
        <begin position="271"/>
        <end position="304"/>
    </location>
</feature>
<feature type="region of interest" description="Disordered" evidence="4">
    <location>
        <begin position="342"/>
        <end position="363"/>
    </location>
</feature>
<feature type="region of interest" description="Disordered" evidence="4">
    <location>
        <begin position="378"/>
        <end position="421"/>
    </location>
</feature>
<feature type="compositionally biased region" description="Low complexity" evidence="4">
    <location>
        <begin position="276"/>
        <end position="287"/>
    </location>
</feature>
<feature type="compositionally biased region" description="Pro residues" evidence="4">
    <location>
        <begin position="384"/>
        <end position="397"/>
    </location>
</feature>
<feature type="compositionally biased region" description="Polar residues" evidence="4">
    <location>
        <begin position="408"/>
        <end position="421"/>
    </location>
</feature>
<feature type="modified residue" description="Phosphoserine" evidence="10">
    <location>
        <position position="251"/>
    </location>
</feature>
<feature type="modified residue" description="Phosphoserine" evidence="10">
    <location>
        <position position="254"/>
    </location>
</feature>
<feature type="helix" evidence="12">
    <location>
        <begin position="17"/>
        <end position="39"/>
    </location>
</feature>
<feature type="strand" evidence="12">
    <location>
        <begin position="44"/>
        <end position="48"/>
    </location>
</feature>
<feature type="strand" evidence="12">
    <location>
        <begin position="81"/>
        <end position="84"/>
    </location>
</feature>
<feature type="strand" evidence="12">
    <location>
        <begin position="86"/>
        <end position="91"/>
    </location>
</feature>
<feature type="strand" evidence="12">
    <location>
        <begin position="93"/>
        <end position="95"/>
    </location>
</feature>
<feature type="strand" evidence="12">
    <location>
        <begin position="99"/>
        <end position="102"/>
    </location>
</feature>
<feature type="turn" evidence="13">
    <location>
        <begin position="105"/>
        <end position="110"/>
    </location>
</feature>
<feature type="turn" evidence="12">
    <location>
        <begin position="112"/>
        <end position="114"/>
    </location>
</feature>
<feature type="helix" evidence="12">
    <location>
        <begin position="117"/>
        <end position="127"/>
    </location>
</feature>
<feature type="helix" evidence="12">
    <location>
        <begin position="129"/>
        <end position="149"/>
    </location>
</feature>
<feature type="helix" evidence="12">
    <location>
        <begin position="156"/>
        <end position="182"/>
    </location>
</feature>
<feature type="strand" evidence="11">
    <location>
        <begin position="199"/>
        <end position="201"/>
    </location>
</feature>
<feature type="helix" evidence="12">
    <location>
        <begin position="203"/>
        <end position="232"/>
    </location>
</feature>
<dbReference type="EMBL" id="AF361346">
    <property type="protein sequence ID" value="AAL50041.1"/>
    <property type="molecule type" value="mRNA"/>
</dbReference>
<dbReference type="RefSeq" id="NP_542427.1">
    <property type="nucleotide sequence ID" value="NM_080696.3"/>
</dbReference>
<dbReference type="PDB" id="6QKC">
    <property type="method" value="EM"/>
    <property type="resolution" value="4.10 A"/>
    <property type="chains" value="I/J=2-417"/>
</dbReference>
<dbReference type="PDB" id="6QKZ">
    <property type="method" value="EM"/>
    <property type="resolution" value="6.30 A"/>
    <property type="chains" value="I/J=2-417"/>
</dbReference>
<dbReference type="PDB" id="7OCA">
    <property type="method" value="EM"/>
    <property type="resolution" value="3.40 A"/>
    <property type="chains" value="I/J=2-417"/>
</dbReference>
<dbReference type="PDB" id="7OCD">
    <property type="method" value="EM"/>
    <property type="resolution" value="3.50 A"/>
    <property type="chains" value="I/J=2-417"/>
</dbReference>
<dbReference type="PDB" id="7OCE">
    <property type="method" value="EM"/>
    <property type="resolution" value="3.10 A"/>
    <property type="chains" value="I/J=2-417"/>
</dbReference>
<dbReference type="PDB" id="7OCF">
    <property type="method" value="EM"/>
    <property type="resolution" value="3.60 A"/>
    <property type="chains" value="I/J=2-417"/>
</dbReference>
<dbReference type="PDB" id="7QHB">
    <property type="method" value="EM"/>
    <property type="resolution" value="3.50 A"/>
    <property type="chains" value="I/J=2-417"/>
</dbReference>
<dbReference type="PDB" id="7QHH">
    <property type="method" value="EM"/>
    <property type="resolution" value="3.60 A"/>
    <property type="chains" value="I/J=2-417"/>
</dbReference>
<dbReference type="PDB" id="8AYL">
    <property type="method" value="EM"/>
    <property type="resolution" value="3.20 A"/>
    <property type="chains" value="I/J=2-417"/>
</dbReference>
<dbReference type="PDB" id="8AYM">
    <property type="method" value="EM"/>
    <property type="resolution" value="3.30 A"/>
    <property type="chains" value="I/J=2-417"/>
</dbReference>
<dbReference type="PDB" id="8AYN">
    <property type="method" value="EM"/>
    <property type="resolution" value="2.80 A"/>
    <property type="chains" value="I/J=2-417"/>
</dbReference>
<dbReference type="PDB" id="8AYO">
    <property type="method" value="EM"/>
    <property type="resolution" value="3.30 A"/>
    <property type="chains" value="I/J=2-417"/>
</dbReference>
<dbReference type="PDBsum" id="6QKC"/>
<dbReference type="PDBsum" id="6QKZ"/>
<dbReference type="PDBsum" id="7OCA"/>
<dbReference type="PDBsum" id="7OCD"/>
<dbReference type="PDBsum" id="7OCE"/>
<dbReference type="PDBsum" id="7OCF"/>
<dbReference type="PDBsum" id="7QHB"/>
<dbReference type="PDBsum" id="7QHH"/>
<dbReference type="PDBsum" id="8AYL"/>
<dbReference type="PDBsum" id="8AYM"/>
<dbReference type="PDBsum" id="8AYN"/>
<dbReference type="PDBsum" id="8AYO"/>
<dbReference type="EMDB" id="EMD-12802"/>
<dbReference type="EMDB" id="EMD-12804"/>
<dbReference type="EMDB" id="EMD-12805"/>
<dbReference type="EMDB" id="EMD-12806"/>
<dbReference type="EMDB" id="EMD-13969"/>
<dbReference type="EMDB" id="EMD-13972"/>
<dbReference type="EMDB" id="EMD-15714"/>
<dbReference type="EMDB" id="EMD-15716"/>
<dbReference type="EMDB" id="EMD-15717"/>
<dbReference type="EMDB" id="EMD-15718"/>
<dbReference type="EMDB" id="EMD-4572"/>
<dbReference type="EMDB" id="EMD-4575"/>
<dbReference type="SMR" id="Q8VHW5"/>
<dbReference type="BioGRID" id="250845">
    <property type="interactions" value="2"/>
</dbReference>
<dbReference type="CORUM" id="Q8VHW5"/>
<dbReference type="FunCoup" id="Q8VHW5">
    <property type="interactions" value="983"/>
</dbReference>
<dbReference type="IntAct" id="Q8VHW5">
    <property type="interactions" value="8"/>
</dbReference>
<dbReference type="MINT" id="Q8VHW5"/>
<dbReference type="STRING" id="10116.ENSRNOP00000075354"/>
<dbReference type="BindingDB" id="Q8VHW5"/>
<dbReference type="ChEMBL" id="CHEMBL4523410"/>
<dbReference type="iPTMnet" id="Q8VHW5"/>
<dbReference type="PhosphoSitePlus" id="Q8VHW5"/>
<dbReference type="SwissPalm" id="Q8VHW5"/>
<dbReference type="PaxDb" id="10116-ENSRNOP00000019300"/>
<dbReference type="ABCD" id="Q8VHW5">
    <property type="antibodies" value="1 sequenced antibody"/>
</dbReference>
<dbReference type="GeneID" id="140729"/>
<dbReference type="KEGG" id="rno:140729"/>
<dbReference type="UCSC" id="RGD:628808">
    <property type="organism name" value="rat"/>
</dbReference>
<dbReference type="AGR" id="RGD:628808"/>
<dbReference type="CTD" id="59283"/>
<dbReference type="RGD" id="628808">
    <property type="gene designation" value="Cacng8"/>
</dbReference>
<dbReference type="eggNOG" id="ENOG502QUEC">
    <property type="taxonomic scope" value="Eukaryota"/>
</dbReference>
<dbReference type="InParanoid" id="Q8VHW5"/>
<dbReference type="OrthoDB" id="79971at9989"/>
<dbReference type="PhylomeDB" id="Q8VHW5"/>
<dbReference type="Reactome" id="R-RNO-399719">
    <property type="pathway name" value="Trafficking of AMPA receptors"/>
</dbReference>
<dbReference type="Reactome" id="R-RNO-5576892">
    <property type="pathway name" value="Phase 0 - rapid depolarisation"/>
</dbReference>
<dbReference type="Reactome" id="R-RNO-5576893">
    <property type="pathway name" value="Phase 2 - plateau phase"/>
</dbReference>
<dbReference type="Reactome" id="R-RNO-5682910">
    <property type="pathway name" value="LGI-ADAM interactions"/>
</dbReference>
<dbReference type="PRO" id="PR:Q8VHW5"/>
<dbReference type="Proteomes" id="UP000002494">
    <property type="component" value="Unplaced"/>
</dbReference>
<dbReference type="GO" id="GO:0032281">
    <property type="term" value="C:AMPA glutamate receptor complex"/>
    <property type="evidence" value="ECO:0000314"/>
    <property type="project" value="UniProtKB"/>
</dbReference>
<dbReference type="GO" id="GO:0032590">
    <property type="term" value="C:dendrite membrane"/>
    <property type="evidence" value="ECO:0000314"/>
    <property type="project" value="RGD"/>
</dbReference>
<dbReference type="GO" id="GO:0098978">
    <property type="term" value="C:glutamatergic synapse"/>
    <property type="evidence" value="ECO:0000314"/>
    <property type="project" value="SynGO"/>
</dbReference>
<dbReference type="GO" id="GO:1990454">
    <property type="term" value="C:L-type voltage-gated calcium channel complex"/>
    <property type="evidence" value="ECO:0000250"/>
    <property type="project" value="UniProtKB"/>
</dbReference>
<dbReference type="GO" id="GO:0014069">
    <property type="term" value="C:postsynaptic density"/>
    <property type="evidence" value="ECO:0000250"/>
    <property type="project" value="UniProtKB"/>
</dbReference>
<dbReference type="GO" id="GO:0098839">
    <property type="term" value="C:postsynaptic density membrane"/>
    <property type="evidence" value="ECO:0000314"/>
    <property type="project" value="SynGO"/>
</dbReference>
<dbReference type="GO" id="GO:0045211">
    <property type="term" value="C:postsynaptic membrane"/>
    <property type="evidence" value="ECO:0000314"/>
    <property type="project" value="RGD"/>
</dbReference>
<dbReference type="GO" id="GO:0098685">
    <property type="term" value="C:Schaffer collateral - CA1 synapse"/>
    <property type="evidence" value="ECO:0000266"/>
    <property type="project" value="RGD"/>
</dbReference>
<dbReference type="GO" id="GO:0005246">
    <property type="term" value="F:calcium channel regulator activity"/>
    <property type="evidence" value="ECO:0000250"/>
    <property type="project" value="UniProtKB"/>
</dbReference>
<dbReference type="GO" id="GO:0016247">
    <property type="term" value="F:channel regulator activity"/>
    <property type="evidence" value="ECO:0000318"/>
    <property type="project" value="GO_Central"/>
</dbReference>
<dbReference type="GO" id="GO:0035255">
    <property type="term" value="F:ionotropic glutamate receptor binding"/>
    <property type="evidence" value="ECO:0000314"/>
    <property type="project" value="RGD"/>
</dbReference>
<dbReference type="GO" id="GO:0030346">
    <property type="term" value="F:protein phosphatase 2B binding"/>
    <property type="evidence" value="ECO:0000353"/>
    <property type="project" value="RGD"/>
</dbReference>
<dbReference type="GO" id="GO:0005245">
    <property type="term" value="F:voltage-gated calcium channel activity"/>
    <property type="evidence" value="ECO:0000318"/>
    <property type="project" value="GO_Central"/>
</dbReference>
<dbReference type="GO" id="GO:0051968">
    <property type="term" value="P:positive regulation of synaptic transmission, glutamatergic"/>
    <property type="evidence" value="ECO:0000318"/>
    <property type="project" value="GO_Central"/>
</dbReference>
<dbReference type="GO" id="GO:0098970">
    <property type="term" value="P:postsynaptic neurotransmitter receptor diffusion trapping"/>
    <property type="evidence" value="ECO:0000318"/>
    <property type="project" value="GO_Central"/>
</dbReference>
<dbReference type="GO" id="GO:2000311">
    <property type="term" value="P:regulation of AMPA receptor activity"/>
    <property type="evidence" value="ECO:0000314"/>
    <property type="project" value="UniProtKB"/>
</dbReference>
<dbReference type="GO" id="GO:0099072">
    <property type="term" value="P:regulation of postsynaptic membrane neurotransmitter receptor levels"/>
    <property type="evidence" value="ECO:0000266"/>
    <property type="project" value="RGD"/>
</dbReference>
<dbReference type="GO" id="GO:0019226">
    <property type="term" value="P:transmission of nerve impulse"/>
    <property type="evidence" value="ECO:0000318"/>
    <property type="project" value="GO_Central"/>
</dbReference>
<dbReference type="FunFam" id="1.20.140.150:FF:000004">
    <property type="entry name" value="Voltage-dependent calcium channel gamma-4 subunit"/>
    <property type="match status" value="1"/>
</dbReference>
<dbReference type="Gene3D" id="1.20.140.150">
    <property type="match status" value="1"/>
</dbReference>
<dbReference type="InterPro" id="IPR051072">
    <property type="entry name" value="CACNG_subunit"/>
</dbReference>
<dbReference type="InterPro" id="IPR004031">
    <property type="entry name" value="PMP22/EMP/MP20/Claudin"/>
</dbReference>
<dbReference type="InterPro" id="IPR008372">
    <property type="entry name" value="VDCC_g8su"/>
</dbReference>
<dbReference type="InterPro" id="IPR008368">
    <property type="entry name" value="VDCC_gsu"/>
</dbReference>
<dbReference type="PANTHER" id="PTHR12107">
    <property type="entry name" value="VOLTAGE-DEPENDENT CALCIUM CHANNEL GAMMA SUBUNIT"/>
    <property type="match status" value="1"/>
</dbReference>
<dbReference type="PANTHER" id="PTHR12107:SF2">
    <property type="entry name" value="VOLTAGE-DEPENDENT CALCIUM CHANNEL GAMMA-8 SUBUNIT"/>
    <property type="match status" value="1"/>
</dbReference>
<dbReference type="Pfam" id="PF00822">
    <property type="entry name" value="PMP22_Claudin"/>
    <property type="match status" value="1"/>
</dbReference>
<dbReference type="PRINTS" id="PR01792">
    <property type="entry name" value="VDCCGAMMA"/>
</dbReference>
<dbReference type="PRINTS" id="PR01796">
    <property type="entry name" value="VDCCGAMMA8"/>
</dbReference>
<organism>
    <name type="scientific">Rattus norvegicus</name>
    <name type="common">Rat</name>
    <dbReference type="NCBI Taxonomy" id="10116"/>
    <lineage>
        <taxon>Eukaryota</taxon>
        <taxon>Metazoa</taxon>
        <taxon>Chordata</taxon>
        <taxon>Craniata</taxon>
        <taxon>Vertebrata</taxon>
        <taxon>Euteleostomi</taxon>
        <taxon>Mammalia</taxon>
        <taxon>Eutheria</taxon>
        <taxon>Euarchontoglires</taxon>
        <taxon>Glires</taxon>
        <taxon>Rodentia</taxon>
        <taxon>Myomorpha</taxon>
        <taxon>Muroidea</taxon>
        <taxon>Muridae</taxon>
        <taxon>Murinae</taxon>
        <taxon>Rattus</taxon>
    </lineage>
</organism>
<keyword id="KW-0002">3D-structure</keyword>
<keyword id="KW-0106">Calcium</keyword>
<keyword id="KW-0107">Calcium channel</keyword>
<keyword id="KW-0109">Calcium transport</keyword>
<keyword id="KW-1003">Cell membrane</keyword>
<keyword id="KW-0407">Ion channel</keyword>
<keyword id="KW-0406">Ion transport</keyword>
<keyword id="KW-0449">Lipoprotein</keyword>
<keyword id="KW-0472">Membrane</keyword>
<keyword id="KW-0564">Palmitate</keyword>
<keyword id="KW-0597">Phosphoprotein</keyword>
<keyword id="KW-0628">Postsynaptic cell membrane</keyword>
<keyword id="KW-1185">Reference proteome</keyword>
<keyword id="KW-0770">Synapse</keyword>
<keyword id="KW-0812">Transmembrane</keyword>
<keyword id="KW-1133">Transmembrane helix</keyword>
<keyword id="KW-0813">Transport</keyword>
<keyword id="KW-0851">Voltage-gated channel</keyword>
<proteinExistence type="evidence at protein level"/>
<sequence length="421" mass="43269">MESLKRWNEERGLWCEKGVQVLLTTIGAFAAFGLMTIAISTDYWLYTRALICNTTNLTAGDDGPPHRGGSGSSEKKDPGGLTHSGLWRICCLEGLKRGVCVKINHFPEDTDYDHDSAEYLLRVVRASSIFPILSAILLLLGGVCVAASRVYKSKRNIILGAGILFVAAGLSNIIGVIVYISANAGEPGPKRDEEKKNHYSYGWSFYFGGLSFILAEVIGVLAVNIYIERSREAHCQSRSDLLKAGGGAGGSGGSGPSAILRLPSYRFRYRRRSRSSSRGSSEASPSRDASPGGPGGPGFASTDISMYTLSRDPSKGSVAAGLASAGGGGGGAGVGAYGGAAGAAGGGGTGSERDRGSSAGFLTLHNAFPKEAASGVTVTVTGPPAAPAPAPPAPAAPAPGTLSKEAAASNTNTLNRKTTPV</sequence>